<dbReference type="EMBL" id="CP000020">
    <property type="protein sequence ID" value="AAW84736.1"/>
    <property type="molecule type" value="Genomic_DNA"/>
</dbReference>
<dbReference type="RefSeq" id="WP_005417234.1">
    <property type="nucleotide sequence ID" value="NZ_CAWLES010000001.1"/>
</dbReference>
<dbReference type="RefSeq" id="YP_203624.1">
    <property type="nucleotide sequence ID" value="NC_006840.2"/>
</dbReference>
<dbReference type="SMR" id="Q5E8B0"/>
<dbReference type="STRING" id="312309.VF_0241"/>
<dbReference type="EnsemblBacteria" id="AAW84736">
    <property type="protein sequence ID" value="AAW84736"/>
    <property type="gene ID" value="VF_0241"/>
</dbReference>
<dbReference type="GeneID" id="54162863"/>
<dbReference type="KEGG" id="vfi:VF_0241"/>
<dbReference type="PATRIC" id="fig|312309.11.peg.237"/>
<dbReference type="eggNOG" id="COG0091">
    <property type="taxonomic scope" value="Bacteria"/>
</dbReference>
<dbReference type="HOGENOM" id="CLU_083987_3_3_6"/>
<dbReference type="OrthoDB" id="9805969at2"/>
<dbReference type="Proteomes" id="UP000000537">
    <property type="component" value="Chromosome I"/>
</dbReference>
<dbReference type="GO" id="GO:0022625">
    <property type="term" value="C:cytosolic large ribosomal subunit"/>
    <property type="evidence" value="ECO:0007669"/>
    <property type="project" value="TreeGrafter"/>
</dbReference>
<dbReference type="GO" id="GO:0019843">
    <property type="term" value="F:rRNA binding"/>
    <property type="evidence" value="ECO:0007669"/>
    <property type="project" value="UniProtKB-UniRule"/>
</dbReference>
<dbReference type="GO" id="GO:0003735">
    <property type="term" value="F:structural constituent of ribosome"/>
    <property type="evidence" value="ECO:0007669"/>
    <property type="project" value="InterPro"/>
</dbReference>
<dbReference type="GO" id="GO:0006412">
    <property type="term" value="P:translation"/>
    <property type="evidence" value="ECO:0007669"/>
    <property type="project" value="UniProtKB-UniRule"/>
</dbReference>
<dbReference type="CDD" id="cd00336">
    <property type="entry name" value="Ribosomal_L22"/>
    <property type="match status" value="1"/>
</dbReference>
<dbReference type="FunFam" id="3.90.470.10:FF:000001">
    <property type="entry name" value="50S ribosomal protein L22"/>
    <property type="match status" value="1"/>
</dbReference>
<dbReference type="Gene3D" id="3.90.470.10">
    <property type="entry name" value="Ribosomal protein L22/L17"/>
    <property type="match status" value="1"/>
</dbReference>
<dbReference type="HAMAP" id="MF_01331_B">
    <property type="entry name" value="Ribosomal_uL22_B"/>
    <property type="match status" value="1"/>
</dbReference>
<dbReference type="InterPro" id="IPR001063">
    <property type="entry name" value="Ribosomal_uL22"/>
</dbReference>
<dbReference type="InterPro" id="IPR005727">
    <property type="entry name" value="Ribosomal_uL22_bac/chlpt-type"/>
</dbReference>
<dbReference type="InterPro" id="IPR047867">
    <property type="entry name" value="Ribosomal_uL22_bac/org-type"/>
</dbReference>
<dbReference type="InterPro" id="IPR018260">
    <property type="entry name" value="Ribosomal_uL22_CS"/>
</dbReference>
<dbReference type="InterPro" id="IPR036394">
    <property type="entry name" value="Ribosomal_uL22_sf"/>
</dbReference>
<dbReference type="NCBIfam" id="TIGR01044">
    <property type="entry name" value="rplV_bact"/>
    <property type="match status" value="1"/>
</dbReference>
<dbReference type="PANTHER" id="PTHR13501">
    <property type="entry name" value="CHLOROPLAST 50S RIBOSOMAL PROTEIN L22-RELATED"/>
    <property type="match status" value="1"/>
</dbReference>
<dbReference type="PANTHER" id="PTHR13501:SF8">
    <property type="entry name" value="LARGE RIBOSOMAL SUBUNIT PROTEIN UL22M"/>
    <property type="match status" value="1"/>
</dbReference>
<dbReference type="Pfam" id="PF00237">
    <property type="entry name" value="Ribosomal_L22"/>
    <property type="match status" value="1"/>
</dbReference>
<dbReference type="SUPFAM" id="SSF54843">
    <property type="entry name" value="Ribosomal protein L22"/>
    <property type="match status" value="1"/>
</dbReference>
<dbReference type="PROSITE" id="PS00464">
    <property type="entry name" value="RIBOSOMAL_L22"/>
    <property type="match status" value="1"/>
</dbReference>
<sequence length="110" mass="12083">MEAIAKHRFAGISPQKARLVADQVRGKSVDQALEILTFSNKKAAVLVKKVLESAIANAEHNEGADIDDLNVAKIFVDEGPIMKRIMPRAKGRADRILKRSSHITIVVADR</sequence>
<protein>
    <recommendedName>
        <fullName evidence="1">Large ribosomal subunit protein uL22</fullName>
    </recommendedName>
    <alternativeName>
        <fullName evidence="2">50S ribosomal protein L22</fullName>
    </alternativeName>
</protein>
<feature type="chain" id="PRO_0000243226" description="Large ribosomal subunit protein uL22">
    <location>
        <begin position="1"/>
        <end position="110"/>
    </location>
</feature>
<keyword id="KW-1185">Reference proteome</keyword>
<keyword id="KW-0687">Ribonucleoprotein</keyword>
<keyword id="KW-0689">Ribosomal protein</keyword>
<keyword id="KW-0694">RNA-binding</keyword>
<keyword id="KW-0699">rRNA-binding</keyword>
<organism>
    <name type="scientific">Aliivibrio fischeri (strain ATCC 700601 / ES114)</name>
    <name type="common">Vibrio fischeri</name>
    <dbReference type="NCBI Taxonomy" id="312309"/>
    <lineage>
        <taxon>Bacteria</taxon>
        <taxon>Pseudomonadati</taxon>
        <taxon>Pseudomonadota</taxon>
        <taxon>Gammaproteobacteria</taxon>
        <taxon>Vibrionales</taxon>
        <taxon>Vibrionaceae</taxon>
        <taxon>Aliivibrio</taxon>
    </lineage>
</organism>
<gene>
    <name evidence="1" type="primary">rplV</name>
    <name type="ordered locus">VF_0241</name>
</gene>
<accession>Q5E8B0</accession>
<reference key="1">
    <citation type="journal article" date="2005" name="Proc. Natl. Acad. Sci. U.S.A.">
        <title>Complete genome sequence of Vibrio fischeri: a symbiotic bacterium with pathogenic congeners.</title>
        <authorList>
            <person name="Ruby E.G."/>
            <person name="Urbanowski M."/>
            <person name="Campbell J."/>
            <person name="Dunn A."/>
            <person name="Faini M."/>
            <person name="Gunsalus R."/>
            <person name="Lostroh P."/>
            <person name="Lupp C."/>
            <person name="McCann J."/>
            <person name="Millikan D."/>
            <person name="Schaefer A."/>
            <person name="Stabb E."/>
            <person name="Stevens A."/>
            <person name="Visick K."/>
            <person name="Whistler C."/>
            <person name="Greenberg E.P."/>
        </authorList>
    </citation>
    <scope>NUCLEOTIDE SEQUENCE [LARGE SCALE GENOMIC DNA]</scope>
    <source>
        <strain>ATCC 700601 / ES114</strain>
    </source>
</reference>
<proteinExistence type="inferred from homology"/>
<evidence type="ECO:0000255" key="1">
    <source>
        <dbReference type="HAMAP-Rule" id="MF_01331"/>
    </source>
</evidence>
<evidence type="ECO:0000305" key="2"/>
<comment type="function">
    <text evidence="1">This protein binds specifically to 23S rRNA; its binding is stimulated by other ribosomal proteins, e.g. L4, L17, and L20. It is important during the early stages of 50S assembly. It makes multiple contacts with different domains of the 23S rRNA in the assembled 50S subunit and ribosome (By similarity).</text>
</comment>
<comment type="function">
    <text evidence="1">The globular domain of the protein is located near the polypeptide exit tunnel on the outside of the subunit, while an extended beta-hairpin is found that lines the wall of the exit tunnel in the center of the 70S ribosome.</text>
</comment>
<comment type="subunit">
    <text evidence="1">Part of the 50S ribosomal subunit.</text>
</comment>
<comment type="similarity">
    <text evidence="1">Belongs to the universal ribosomal protein uL22 family.</text>
</comment>
<name>RL22_ALIF1</name>